<dbReference type="EC" id="4.2.1.-" evidence="4"/>
<dbReference type="EMBL" id="KX651614">
    <property type="protein sequence ID" value="AOG21006.1"/>
    <property type="molecule type" value="Genomic_DNA"/>
</dbReference>
<dbReference type="SMR" id="A0A1B3PEI9"/>
<dbReference type="UniPathway" id="UPA00094"/>
<dbReference type="GO" id="GO:0005737">
    <property type="term" value="C:cytoplasm"/>
    <property type="evidence" value="ECO:0007669"/>
    <property type="project" value="InterPro"/>
</dbReference>
<dbReference type="GO" id="GO:0019171">
    <property type="term" value="F:(3R)-hydroxyacyl-[acyl-carrier-protein] dehydratase activity"/>
    <property type="evidence" value="ECO:0007669"/>
    <property type="project" value="UniProtKB-EC"/>
</dbReference>
<dbReference type="GO" id="GO:0034017">
    <property type="term" value="F:trans-2-decenoyl-acyl-carrier-protein isomerase activity"/>
    <property type="evidence" value="ECO:0007669"/>
    <property type="project" value="UniProtKB-EC"/>
</dbReference>
<dbReference type="GO" id="GO:0006633">
    <property type="term" value="P:fatty acid biosynthetic process"/>
    <property type="evidence" value="ECO:0007669"/>
    <property type="project" value="UniProtKB-UniPathway"/>
</dbReference>
<dbReference type="CDD" id="cd01287">
    <property type="entry name" value="FabA"/>
    <property type="match status" value="2"/>
</dbReference>
<dbReference type="CDD" id="cd04742">
    <property type="entry name" value="NPD_FabD"/>
    <property type="match status" value="1"/>
</dbReference>
<dbReference type="Gene3D" id="3.20.20.70">
    <property type="entry name" value="Aldolase class I"/>
    <property type="match status" value="2"/>
</dbReference>
<dbReference type="Gene3D" id="3.10.129.10">
    <property type="entry name" value="Hotdog Thioesterase"/>
    <property type="match status" value="4"/>
</dbReference>
<dbReference type="InterPro" id="IPR013785">
    <property type="entry name" value="Aldolase_TIM"/>
</dbReference>
<dbReference type="InterPro" id="IPR010083">
    <property type="entry name" value="FabA"/>
</dbReference>
<dbReference type="InterPro" id="IPR013114">
    <property type="entry name" value="FabA_FabZ"/>
</dbReference>
<dbReference type="InterPro" id="IPR049489">
    <property type="entry name" value="FabD-like_helical_ins"/>
</dbReference>
<dbReference type="InterPro" id="IPR029069">
    <property type="entry name" value="HotDog_dom_sf"/>
</dbReference>
<dbReference type="InterPro" id="IPR014179">
    <property type="entry name" value="PfaD-like_TIM-barrel"/>
</dbReference>
<dbReference type="NCBIfam" id="TIGR02814">
    <property type="entry name" value="pfaD_fam"/>
    <property type="match status" value="1"/>
</dbReference>
<dbReference type="PANTHER" id="PTHR32332">
    <property type="entry name" value="2-NITROPROPANE DIOXYGENASE"/>
    <property type="match status" value="1"/>
</dbReference>
<dbReference type="PANTHER" id="PTHR32332:SF20">
    <property type="entry name" value="2-NITROPROPANE DIOXYGENASE-LIKE PROTEIN"/>
    <property type="match status" value="1"/>
</dbReference>
<dbReference type="Pfam" id="PF07977">
    <property type="entry name" value="FabA"/>
    <property type="match status" value="2"/>
</dbReference>
<dbReference type="Pfam" id="PF21607">
    <property type="entry name" value="FabD_helical_ins"/>
    <property type="match status" value="1"/>
</dbReference>
<dbReference type="SUPFAM" id="SSF51412">
    <property type="entry name" value="Inosine monophosphate dehydrogenase (IMPDH)"/>
    <property type="match status" value="1"/>
</dbReference>
<dbReference type="SUPFAM" id="SSF54637">
    <property type="entry name" value="Thioesterase/thiol ester dehydrase-isomerase"/>
    <property type="match status" value="4"/>
</dbReference>
<name>PFA3_THRS2</name>
<sequence length="1497" mass="164610">MALRVKTNKKPCWEMTKEELTSGKTEVFNYEELLEFAEGDIGKVFGPEFAPIDKYSRRVRLPAREYLLVTRVTLMDAEPNNYRVGARMVTEYDLPVNGELSEGGDCPWAVLVESGQCDLMLISYMGIDFQCQGDRVYRLLNTTLTFYGVAHEGETLEYDIRVTGFAKRLDGGISMFFFEYDCYVNGRLLIEMRDGCAGFFTNEELAAGKGVVFTRADLAARAKVAKQDISPYAVAPCLHKTTLSEKEMQTLVDKDWASVFGSKNGMPEINYKLCARKMLMIDRVPKIDHTGGIYGLGLIVGEKILERDHWYFPCHFVKDEVMAGSLVSDGCSQMLKMYMIWLGLHLTTGPFDFRPVSGHPNKVRCRGQISPHKGKLVYVMEIKEIGFDEKNDPYAIADVNIIDIDYEKGQTFEMSRLGDYGKGDLNKKIVVDFKGIALKMQKRSTSTEEPSKVVPVFAKGQATVGTEASRAPGAATAYSPDVLAPAPVALPKNLLKGDPLAPREMTWHPMARIPGNPTPSFAPSAYAPRNIAFTPFPGNPLDNDHTPGKMPLTWFNMAEFMAGKVSQCLGPEFTKFDNSNTSRSPAWDLALVTRAVSVTDMEHVKWRNIDCNPSKGTMIGEFDCPADAWFYKGAANDGHMPYSILMEIALQTSGVLTSVLKAPLTMEKDDILFRNLDANADFVRADVDFRGKTIRNITKCTGYSMLGEMGVHRFSFELSVDDVVFYKGTTSFGWFVPEVFAAQAGLDSGRKSEPWFVEQKVPAGQVVSYDVRPGASGRTSLFANAPSGAQLNRRTNQGQYLDKIDLVSGSGKQGLGYGHGVKAVNPNDWFFACHFWFDSVMPGSLGVESMFQLVEAIAVQDDLAGKHGIANPTITHAPGKISWKYRGQLTPKSKQMDSEVHVTSIEAHDGVVDVVADGYLWADGLRVYQVNNIRVRIASGEPAASSSASSVGSSASAEVAERTRSKAAPQPVASGPAQSINLEQLKTDLLELDAPLYLSQDPTTGQLKKHTDVASGQATIVQPCTLGDLGDRSFMETYGVVAPLYTGAMAKGIASADLVIAAGKRKILGSFGAGGLPMHLVREAVDKIQAALPQGPYAVNLIHSPFDSNLEKGNVDLFLEKGVTVVEASAFMTLTPQVVRYRAAGLSRNADGSVRIRNRIIGKVSRTELAEMFIRPAPEHLLEKLIASGEITQEQAELARRVPVADDIAVEADSGGHTDNRPIHVILPLIINLRNRLHRECGYPASLRVRVGAGGGVGCPQAAAAALSMGAAFIVTGTVNQVCKQSGTCDNVRKALSKASYSDICMAPAADMFEEGVKLQVLKKGTMFPSRANKLYELFCKYDSFESMPPNELERVEKRIFQRALAEVWQETKDFYINRLHNPEKIQRAERDPKLKMSLCFRWYLGLASFWANAGIADRVMDYQVWCGPAIGAFNDFIKGTYLDPEVSGEYPCVVQVNLQILRGACYLRRLNALRNDPRIDLETEDAAFVYEPTGSL</sequence>
<evidence type="ECO:0000250" key="1">
    <source>
        <dbReference type="UniProtKB" id="Q94FB6"/>
    </source>
</evidence>
<evidence type="ECO:0000255" key="2"/>
<evidence type="ECO:0000256" key="3">
    <source>
        <dbReference type="SAM" id="MobiDB-lite"/>
    </source>
</evidence>
<evidence type="ECO:0000269" key="4">
    <source>
    </source>
</evidence>
<evidence type="ECO:0000269" key="5">
    <source>
    </source>
</evidence>
<evidence type="ECO:0000269" key="6">
    <source>
    </source>
</evidence>
<evidence type="ECO:0000303" key="7">
    <source>
    </source>
</evidence>
<evidence type="ECO:0000305" key="8"/>
<evidence type="ECO:0000305" key="9">
    <source>
    </source>
</evidence>
<feature type="chain" id="PRO_0000456890" description="Polyunsaturated fatty acid synthase subunit C">
    <location>
        <begin position="1"/>
        <end position="1497"/>
    </location>
</feature>
<feature type="region of interest" description="Dehydratase (DH) domain 1" evidence="2 9">
    <location>
        <begin position="271"/>
        <end position="422"/>
    </location>
</feature>
<feature type="region of interest" description="Dehydratase (DH) domain 2" evidence="2 9">
    <location>
        <begin position="797"/>
        <end position="937"/>
    </location>
</feature>
<feature type="region of interest" description="Disordered" evidence="3">
    <location>
        <begin position="944"/>
        <end position="977"/>
    </location>
</feature>
<feature type="region of interest" description="Enoylreductase (ER) domain" evidence="2 9">
    <location>
        <begin position="1026"/>
        <end position="1470"/>
    </location>
</feature>
<feature type="compositionally biased region" description="Low complexity" evidence="3">
    <location>
        <begin position="944"/>
        <end position="958"/>
    </location>
</feature>
<protein>
    <recommendedName>
        <fullName evidence="7">Polyunsaturated fatty acid synthase subunit C</fullName>
        <shortName evidence="7">PUFAs-C</shortName>
        <ecNumber evidence="4">4.2.1.-</ecNumber>
    </recommendedName>
</protein>
<organism>
    <name type="scientific">Thraustochytrium sp. (strain ATCC 26185 / S-3)</name>
    <dbReference type="NCBI Taxonomy" id="672127"/>
    <lineage>
        <taxon>Eukaryota</taxon>
        <taxon>Sar</taxon>
        <taxon>Stramenopiles</taxon>
        <taxon>Bigyra</taxon>
        <taxon>Labyrinthulomycetes</taxon>
        <taxon>Thraustochytrida</taxon>
        <taxon>Thraustochytriaceae</taxon>
        <taxon>Thraustochytrium</taxon>
    </lineage>
</organism>
<proteinExistence type="evidence at protein level"/>
<accession>A0A1B3PEI9</accession>
<gene>
    <name evidence="7" type="primary">ORF-C</name>
</gene>
<comment type="function">
    <text evidence="1 4">Polyketide synthase-like protein; part of the polyunsaturated fatty acid synthase composed of the 3 PKS-like subunits A, B and C (PubMed:27527703). While the saturated fatty acids (SFAs) in Thraustochytrium are produced by the conventional fatty acid synthase (FAS) pathway, polyunsaturated fatty acids (PUFAs) including docosahexeanoic acid (DHA) and docosapentaenoic acid (DPA) are synthesized via an anaerobical PKS pathway (PubMed:27527703). PUFA synthase assimilates fatty acyl-CoA, the product of FAS, as the starter unit to synthesize DPA, and this starter unit may be butyryl-CoA, hexanoyl-CoA, or octanoyl-CoA (By similarity). DPA and DHA biosynthesis seem to differ by the reduction at the N-3 position by PUFA synthase, not the extension of carbon chain (By similarity). In DHA biosynthesis, PUFA synthase extends the fatty acyl chain from the methyl toward the carboxyl end, and the double bond is formed when the carbon chain is growing, instead of afterward (By similarity). Therefore, PUFA synthase is unable to transform DPA to DHA, suggesting that DPA is not the precursor of DHA (By similarity). Moreover, DPA molecule is partly extended by FAS KS domain, so DPA biosynthesis is less dependent on PUFA synthase KS domain than DHA (By similarity).</text>
</comment>
<comment type="pathway">
    <text evidence="4">Lipid metabolism; fatty acid biosynthesis.</text>
</comment>
<comment type="subunit">
    <text evidence="4">Component of the polyunsaturated fatty acid synthase complex composed of at least ORF-A, ORF-B and ORF-C.</text>
</comment>
<comment type="domain">
    <text evidence="9">Multidomain protein; including 2 dehydratase (DH) domains that reduce hydroxyl groups to enoyl groups and an enoylreductase (ER) domain that reduces enoyl groups to alkyl groups.</text>
</comment>
<comment type="biotechnology">
    <text evidence="5 6">Polyunsaturated fatty acids may be beneficial in prevention of cardiovascular disease and treatment of mild Alzheimer's disease.</text>
</comment>
<comment type="miscellaneous">
    <text evidence="9">The homology between the prokaryotic Shewanella and eukaryotic Labyrinthulomycetes genes suggests that the polyunsaturated fatty acid synthase subunits have undergone lateral gene transfer.</text>
</comment>
<comment type="similarity">
    <text evidence="8">Belongs to the thioester dehydratase family. FabA subfamily.</text>
</comment>
<keyword id="KW-0275">Fatty acid biosynthesis</keyword>
<keyword id="KW-0276">Fatty acid metabolism</keyword>
<keyword id="KW-0444">Lipid biosynthesis</keyword>
<keyword id="KW-0443">Lipid metabolism</keyword>
<keyword id="KW-0456">Lyase</keyword>
<reference key="1">
    <citation type="journal article" date="2016" name="J. Lipid Res.">
        <title>Biosynthetic mechanism of very long chain polyunsaturated fatty acids in Thraustochytrium sp. 26185.</title>
        <authorList>
            <person name="Meesapyodsuk D."/>
            <person name="Qiu X."/>
        </authorList>
    </citation>
    <scope>NUCLEOTIDE SEQUENCE [GENOMIC DNA]</scope>
    <scope>FUNCTION</scope>
    <scope>DOMAIN</scope>
    <scope>SUBUNIT</scope>
    <scope>CATALYTIC ACTIVITY</scope>
    <source>
        <strain>ATCC 26185 / S-3</strain>
    </source>
</reference>
<reference key="2">
    <citation type="journal article" date="2017" name="J. Clin. Lipidol.">
        <title>Use of supplemental long-chain omega-3 fatty acids and risk for cardiac death: An updated meta-analysis and review of research gaps.</title>
        <authorList>
            <person name="Maki K.C."/>
            <person name="Palacios O.M."/>
            <person name="Bell M."/>
            <person name="Toth P.P."/>
        </authorList>
    </citation>
    <scope>BIOTECHNOLOGY</scope>
</reference>
<reference key="3">
    <citation type="journal article" date="2018" name="Nutr. Neurosci.">
        <title>Omega-3 fatty acids' supplementation in Alzheimer's disease: A systematic review.</title>
        <authorList>
            <person name="Canhada S."/>
            <person name="Castro K."/>
            <person name="Perry I.S."/>
            <person name="Luft V.C."/>
        </authorList>
    </citation>
    <scope>BIOTECHNOLOGY</scope>
</reference>